<feature type="chain" id="PRO_1000202692" description="Peptide chain release factor 1">
    <location>
        <begin position="1"/>
        <end position="360"/>
    </location>
</feature>
<feature type="region of interest" description="Disordered" evidence="2">
    <location>
        <begin position="285"/>
        <end position="304"/>
    </location>
</feature>
<feature type="modified residue" description="N5-methylglutamine" evidence="1">
    <location>
        <position position="235"/>
    </location>
</feature>
<evidence type="ECO:0000255" key="1">
    <source>
        <dbReference type="HAMAP-Rule" id="MF_00093"/>
    </source>
</evidence>
<evidence type="ECO:0000256" key="2">
    <source>
        <dbReference type="SAM" id="MobiDB-lite"/>
    </source>
</evidence>
<reference key="1">
    <citation type="submission" date="2009-03" db="EMBL/GenBank/DDBJ databases">
        <title>Complete genome sequence of Edwardsiella ictaluri 93-146.</title>
        <authorList>
            <person name="Williams M.L."/>
            <person name="Gillaspy A.F."/>
            <person name="Dyer D.W."/>
            <person name="Thune R.L."/>
            <person name="Waldbieser G.C."/>
            <person name="Schuster S.C."/>
            <person name="Gipson J."/>
            <person name="Zaitshik J."/>
            <person name="Landry C."/>
            <person name="Lawrence M.L."/>
        </authorList>
    </citation>
    <scope>NUCLEOTIDE SEQUENCE [LARGE SCALE GENOMIC DNA]</scope>
    <source>
        <strain>93-146</strain>
    </source>
</reference>
<comment type="function">
    <text evidence="1">Peptide chain release factor 1 directs the termination of translation in response to the peptide chain termination codons UAG and UAA.</text>
</comment>
<comment type="subcellular location">
    <subcellularLocation>
        <location evidence="1">Cytoplasm</location>
    </subcellularLocation>
</comment>
<comment type="PTM">
    <text evidence="1">Methylated by PrmC. Methylation increases the termination efficiency of RF1.</text>
</comment>
<comment type="similarity">
    <text evidence="1">Belongs to the prokaryotic/mitochondrial release factor family.</text>
</comment>
<dbReference type="EMBL" id="CP001600">
    <property type="protein sequence ID" value="ACR68750.1"/>
    <property type="molecule type" value="Genomic_DNA"/>
</dbReference>
<dbReference type="RefSeq" id="WP_015870908.1">
    <property type="nucleotide sequence ID" value="NZ_CP169062.1"/>
</dbReference>
<dbReference type="SMR" id="C5B814"/>
<dbReference type="STRING" id="67780.B6E78_01015"/>
<dbReference type="GeneID" id="69538542"/>
<dbReference type="KEGG" id="eic:NT01EI_1564"/>
<dbReference type="PATRIC" id="fig|634503.3.peg.1398"/>
<dbReference type="HOGENOM" id="CLU_036856_0_1_6"/>
<dbReference type="OrthoDB" id="9806673at2"/>
<dbReference type="Proteomes" id="UP000001485">
    <property type="component" value="Chromosome"/>
</dbReference>
<dbReference type="GO" id="GO:0005737">
    <property type="term" value="C:cytoplasm"/>
    <property type="evidence" value="ECO:0007669"/>
    <property type="project" value="UniProtKB-SubCell"/>
</dbReference>
<dbReference type="GO" id="GO:0016149">
    <property type="term" value="F:translation release factor activity, codon specific"/>
    <property type="evidence" value="ECO:0007669"/>
    <property type="project" value="UniProtKB-UniRule"/>
</dbReference>
<dbReference type="FunFam" id="3.30.160.20:FF:000004">
    <property type="entry name" value="Peptide chain release factor 1"/>
    <property type="match status" value="1"/>
</dbReference>
<dbReference type="FunFam" id="3.30.70.1660:FF:000002">
    <property type="entry name" value="Peptide chain release factor 1"/>
    <property type="match status" value="1"/>
</dbReference>
<dbReference type="FunFam" id="3.30.70.1660:FF:000004">
    <property type="entry name" value="Peptide chain release factor 1"/>
    <property type="match status" value="1"/>
</dbReference>
<dbReference type="Gene3D" id="3.30.160.20">
    <property type="match status" value="1"/>
</dbReference>
<dbReference type="Gene3D" id="3.30.70.1660">
    <property type="match status" value="1"/>
</dbReference>
<dbReference type="Gene3D" id="6.10.140.1950">
    <property type="match status" value="1"/>
</dbReference>
<dbReference type="HAMAP" id="MF_00093">
    <property type="entry name" value="Rel_fac_1"/>
    <property type="match status" value="1"/>
</dbReference>
<dbReference type="InterPro" id="IPR005139">
    <property type="entry name" value="PCRF"/>
</dbReference>
<dbReference type="InterPro" id="IPR000352">
    <property type="entry name" value="Pep_chain_release_fac_I"/>
</dbReference>
<dbReference type="InterPro" id="IPR045853">
    <property type="entry name" value="Pep_chain_release_fac_I_sf"/>
</dbReference>
<dbReference type="InterPro" id="IPR050057">
    <property type="entry name" value="Prokaryotic/Mito_RF"/>
</dbReference>
<dbReference type="InterPro" id="IPR004373">
    <property type="entry name" value="RF-1"/>
</dbReference>
<dbReference type="NCBIfam" id="TIGR00019">
    <property type="entry name" value="prfA"/>
    <property type="match status" value="1"/>
</dbReference>
<dbReference type="NCBIfam" id="NF001859">
    <property type="entry name" value="PRK00591.1"/>
    <property type="match status" value="1"/>
</dbReference>
<dbReference type="PANTHER" id="PTHR43804">
    <property type="entry name" value="LD18447P"/>
    <property type="match status" value="1"/>
</dbReference>
<dbReference type="PANTHER" id="PTHR43804:SF7">
    <property type="entry name" value="LD18447P"/>
    <property type="match status" value="1"/>
</dbReference>
<dbReference type="Pfam" id="PF03462">
    <property type="entry name" value="PCRF"/>
    <property type="match status" value="1"/>
</dbReference>
<dbReference type="Pfam" id="PF00472">
    <property type="entry name" value="RF-1"/>
    <property type="match status" value="1"/>
</dbReference>
<dbReference type="SMART" id="SM00937">
    <property type="entry name" value="PCRF"/>
    <property type="match status" value="1"/>
</dbReference>
<dbReference type="SUPFAM" id="SSF75620">
    <property type="entry name" value="Release factor"/>
    <property type="match status" value="1"/>
</dbReference>
<dbReference type="PROSITE" id="PS00745">
    <property type="entry name" value="RF_PROK_I"/>
    <property type="match status" value="1"/>
</dbReference>
<protein>
    <recommendedName>
        <fullName evidence="1">Peptide chain release factor 1</fullName>
        <shortName evidence="1">RF-1</shortName>
    </recommendedName>
</protein>
<name>RF1_EDWI9</name>
<sequence length="360" mass="40313">MKPSIVAKLEALQERHEEVQALLGDAGVIADQDRFRALSREYAQLTDVSHCFLAWRQVQDDLTTAEMLLDDPEMRDMAQEELKEARGRLAELEQQLQILLLPKDPDDERDCFLEVRAGTGGDEAALFAGDLFRMYSRYAEARRWRIEIMSASEGEHGGYKEVIARVSGDGAYGRLKFESGGHRVQRVPATESQGRIHTSACTVAVMPAVPEAELPQINPADLRIDTYRSSGAGGQHVNTTDSAIRITHLPTGIVVECQDERSQHKNKAKAMSVLGARIRAAEIAKRQQEEASTRRNLLGSGDRSDRVRTYNFPQGRVTDHRINLTLYRLDEVMEGKLDNLIEPIVQEHQADQLSALAEQE</sequence>
<organism>
    <name type="scientific">Edwardsiella ictaluri (strain 93-146)</name>
    <dbReference type="NCBI Taxonomy" id="634503"/>
    <lineage>
        <taxon>Bacteria</taxon>
        <taxon>Pseudomonadati</taxon>
        <taxon>Pseudomonadota</taxon>
        <taxon>Gammaproteobacteria</taxon>
        <taxon>Enterobacterales</taxon>
        <taxon>Hafniaceae</taxon>
        <taxon>Edwardsiella</taxon>
    </lineage>
</organism>
<keyword id="KW-0963">Cytoplasm</keyword>
<keyword id="KW-0488">Methylation</keyword>
<keyword id="KW-0648">Protein biosynthesis</keyword>
<proteinExistence type="inferred from homology"/>
<accession>C5B814</accession>
<gene>
    <name evidence="1" type="primary">prfA</name>
    <name type="ordered locus">NT01EI_1564</name>
</gene>